<dbReference type="EC" id="3.6.5.3" evidence="2"/>
<dbReference type="EMBL" id="CP001291">
    <property type="protein sequence ID" value="ACK68522.1"/>
    <property type="molecule type" value="Genomic_DNA"/>
</dbReference>
<dbReference type="RefSeq" id="WP_012597473.1">
    <property type="nucleotide sequence ID" value="NC_011729.1"/>
</dbReference>
<dbReference type="SMR" id="B7K834"/>
<dbReference type="STRING" id="65393.PCC7424_0049"/>
<dbReference type="KEGG" id="cyc:PCC7424_0049"/>
<dbReference type="eggNOG" id="COG0050">
    <property type="taxonomic scope" value="Bacteria"/>
</dbReference>
<dbReference type="HOGENOM" id="CLU_007265_0_1_3"/>
<dbReference type="OrthoDB" id="9804504at2"/>
<dbReference type="Proteomes" id="UP000002384">
    <property type="component" value="Chromosome"/>
</dbReference>
<dbReference type="GO" id="GO:0005829">
    <property type="term" value="C:cytosol"/>
    <property type="evidence" value="ECO:0007669"/>
    <property type="project" value="TreeGrafter"/>
</dbReference>
<dbReference type="GO" id="GO:0005525">
    <property type="term" value="F:GTP binding"/>
    <property type="evidence" value="ECO:0007669"/>
    <property type="project" value="UniProtKB-UniRule"/>
</dbReference>
<dbReference type="GO" id="GO:0003924">
    <property type="term" value="F:GTPase activity"/>
    <property type="evidence" value="ECO:0007669"/>
    <property type="project" value="InterPro"/>
</dbReference>
<dbReference type="GO" id="GO:0003746">
    <property type="term" value="F:translation elongation factor activity"/>
    <property type="evidence" value="ECO:0007669"/>
    <property type="project" value="UniProtKB-UniRule"/>
</dbReference>
<dbReference type="CDD" id="cd01884">
    <property type="entry name" value="EF_Tu"/>
    <property type="match status" value="1"/>
</dbReference>
<dbReference type="CDD" id="cd03697">
    <property type="entry name" value="EFTU_II"/>
    <property type="match status" value="1"/>
</dbReference>
<dbReference type="CDD" id="cd03707">
    <property type="entry name" value="EFTU_III"/>
    <property type="match status" value="1"/>
</dbReference>
<dbReference type="FunFam" id="2.40.30.10:FF:000001">
    <property type="entry name" value="Elongation factor Tu"/>
    <property type="match status" value="1"/>
</dbReference>
<dbReference type="FunFam" id="2.40.30.10:FF:000046">
    <property type="entry name" value="Elongation factor Tu"/>
    <property type="match status" value="1"/>
</dbReference>
<dbReference type="FunFam" id="3.40.50.300:FF:000003">
    <property type="entry name" value="Elongation factor Tu"/>
    <property type="match status" value="1"/>
</dbReference>
<dbReference type="Gene3D" id="3.40.50.300">
    <property type="entry name" value="P-loop containing nucleotide triphosphate hydrolases"/>
    <property type="match status" value="1"/>
</dbReference>
<dbReference type="Gene3D" id="2.40.30.10">
    <property type="entry name" value="Translation factors"/>
    <property type="match status" value="2"/>
</dbReference>
<dbReference type="HAMAP" id="MF_00118_B">
    <property type="entry name" value="EF_Tu_B"/>
    <property type="match status" value="1"/>
</dbReference>
<dbReference type="InterPro" id="IPR041709">
    <property type="entry name" value="EF-Tu_GTP-bd"/>
</dbReference>
<dbReference type="InterPro" id="IPR050055">
    <property type="entry name" value="EF-Tu_GTPase"/>
</dbReference>
<dbReference type="InterPro" id="IPR004161">
    <property type="entry name" value="EFTu-like_2"/>
</dbReference>
<dbReference type="InterPro" id="IPR033720">
    <property type="entry name" value="EFTU_2"/>
</dbReference>
<dbReference type="InterPro" id="IPR031157">
    <property type="entry name" value="G_TR_CS"/>
</dbReference>
<dbReference type="InterPro" id="IPR027417">
    <property type="entry name" value="P-loop_NTPase"/>
</dbReference>
<dbReference type="InterPro" id="IPR005225">
    <property type="entry name" value="Small_GTP-bd"/>
</dbReference>
<dbReference type="InterPro" id="IPR000795">
    <property type="entry name" value="T_Tr_GTP-bd_dom"/>
</dbReference>
<dbReference type="InterPro" id="IPR009000">
    <property type="entry name" value="Transl_B-barrel_sf"/>
</dbReference>
<dbReference type="InterPro" id="IPR009001">
    <property type="entry name" value="Transl_elong_EF1A/Init_IF2_C"/>
</dbReference>
<dbReference type="InterPro" id="IPR004541">
    <property type="entry name" value="Transl_elong_EFTu/EF1A_bac/org"/>
</dbReference>
<dbReference type="InterPro" id="IPR004160">
    <property type="entry name" value="Transl_elong_EFTu/EF1A_C"/>
</dbReference>
<dbReference type="NCBIfam" id="TIGR00485">
    <property type="entry name" value="EF-Tu"/>
    <property type="match status" value="1"/>
</dbReference>
<dbReference type="NCBIfam" id="NF000766">
    <property type="entry name" value="PRK00049.1"/>
    <property type="match status" value="1"/>
</dbReference>
<dbReference type="NCBIfam" id="NF009372">
    <property type="entry name" value="PRK12735.1"/>
    <property type="match status" value="1"/>
</dbReference>
<dbReference type="NCBIfam" id="NF009373">
    <property type="entry name" value="PRK12736.1"/>
    <property type="match status" value="1"/>
</dbReference>
<dbReference type="NCBIfam" id="TIGR00231">
    <property type="entry name" value="small_GTP"/>
    <property type="match status" value="1"/>
</dbReference>
<dbReference type="PANTHER" id="PTHR43721:SF22">
    <property type="entry name" value="ELONGATION FACTOR TU, MITOCHONDRIAL"/>
    <property type="match status" value="1"/>
</dbReference>
<dbReference type="PANTHER" id="PTHR43721">
    <property type="entry name" value="ELONGATION FACTOR TU-RELATED"/>
    <property type="match status" value="1"/>
</dbReference>
<dbReference type="Pfam" id="PF00009">
    <property type="entry name" value="GTP_EFTU"/>
    <property type="match status" value="1"/>
</dbReference>
<dbReference type="Pfam" id="PF03144">
    <property type="entry name" value="GTP_EFTU_D2"/>
    <property type="match status" value="1"/>
</dbReference>
<dbReference type="Pfam" id="PF03143">
    <property type="entry name" value="GTP_EFTU_D3"/>
    <property type="match status" value="1"/>
</dbReference>
<dbReference type="PRINTS" id="PR00315">
    <property type="entry name" value="ELONGATNFCT"/>
</dbReference>
<dbReference type="SUPFAM" id="SSF50465">
    <property type="entry name" value="EF-Tu/eEF-1alpha/eIF2-gamma C-terminal domain"/>
    <property type="match status" value="1"/>
</dbReference>
<dbReference type="SUPFAM" id="SSF52540">
    <property type="entry name" value="P-loop containing nucleoside triphosphate hydrolases"/>
    <property type="match status" value="1"/>
</dbReference>
<dbReference type="SUPFAM" id="SSF50447">
    <property type="entry name" value="Translation proteins"/>
    <property type="match status" value="1"/>
</dbReference>
<dbReference type="PROSITE" id="PS00301">
    <property type="entry name" value="G_TR_1"/>
    <property type="match status" value="1"/>
</dbReference>
<dbReference type="PROSITE" id="PS51722">
    <property type="entry name" value="G_TR_2"/>
    <property type="match status" value="1"/>
</dbReference>
<keyword id="KW-0963">Cytoplasm</keyword>
<keyword id="KW-0251">Elongation factor</keyword>
<keyword id="KW-0342">GTP-binding</keyword>
<keyword id="KW-0378">Hydrolase</keyword>
<keyword id="KW-0460">Magnesium</keyword>
<keyword id="KW-0479">Metal-binding</keyword>
<keyword id="KW-0547">Nucleotide-binding</keyword>
<keyword id="KW-0648">Protein biosynthesis</keyword>
<keyword id="KW-1185">Reference proteome</keyword>
<gene>
    <name evidence="2" type="primary">tuf</name>
    <name type="ordered locus">PCC7424_0049</name>
</gene>
<evidence type="ECO:0000250" key="1"/>
<evidence type="ECO:0000255" key="2">
    <source>
        <dbReference type="HAMAP-Rule" id="MF_00118"/>
    </source>
</evidence>
<sequence length="410" mass="44856">MARAKFERTKPHVNIGTIGHVDHGKTTLTAAITMALAAQGKAKARKYADIDAAPEEKARGITINTAHVEYETDDRHYAHVDCPGHADYVKNMITGAAQMDGGILVVSAADGPMPQTREHILLAKQVGVPNLVVFLNKEDMVDDEELLELVELEVRELLSEYEFPGDDIPIVKGSALKAVEALTDTPTIKKGDNDWVDKILALMDEVDAYIPTPERDIDKPFLMAIEDVFSISGRGTVATGRIERGKIKAGETVEIVGIKEKTKSTTVTGVEMFQKTLEEGLAGDNVGLLLRGVQKEEIERGMVIAKPGSIKPHTQFEGEVYVLTKEEGGRHTPFFKNYRPQFYVRTTDVTGTIVDYTADDGSAVEMVMPGDRIKMTVELINPIAIEQGMRFAIREGGRTIGAGVVSKIIQ</sequence>
<reference key="1">
    <citation type="journal article" date="2011" name="MBio">
        <title>Novel metabolic attributes of the genus Cyanothece, comprising a group of unicellular nitrogen-fixing Cyanobacteria.</title>
        <authorList>
            <person name="Bandyopadhyay A."/>
            <person name="Elvitigala T."/>
            <person name="Welsh E."/>
            <person name="Stockel J."/>
            <person name="Liberton M."/>
            <person name="Min H."/>
            <person name="Sherman L.A."/>
            <person name="Pakrasi H.B."/>
        </authorList>
    </citation>
    <scope>NUCLEOTIDE SEQUENCE [LARGE SCALE GENOMIC DNA]</scope>
    <source>
        <strain>PCC 7424</strain>
    </source>
</reference>
<name>EFTU_GLOC7</name>
<proteinExistence type="inferred from homology"/>
<accession>B7K834</accession>
<feature type="chain" id="PRO_1000201398" description="Elongation factor Tu">
    <location>
        <begin position="1"/>
        <end position="410"/>
    </location>
</feature>
<feature type="domain" description="tr-type G">
    <location>
        <begin position="10"/>
        <end position="214"/>
    </location>
</feature>
<feature type="region of interest" description="G1" evidence="1">
    <location>
        <begin position="19"/>
        <end position="26"/>
    </location>
</feature>
<feature type="region of interest" description="G2" evidence="1">
    <location>
        <begin position="60"/>
        <end position="64"/>
    </location>
</feature>
<feature type="region of interest" description="G3" evidence="1">
    <location>
        <begin position="81"/>
        <end position="84"/>
    </location>
</feature>
<feature type="region of interest" description="G4" evidence="1">
    <location>
        <begin position="136"/>
        <end position="139"/>
    </location>
</feature>
<feature type="region of interest" description="G5" evidence="1">
    <location>
        <begin position="174"/>
        <end position="176"/>
    </location>
</feature>
<feature type="binding site" evidence="2">
    <location>
        <begin position="19"/>
        <end position="26"/>
    </location>
    <ligand>
        <name>GTP</name>
        <dbReference type="ChEBI" id="CHEBI:37565"/>
    </ligand>
</feature>
<feature type="binding site" evidence="2">
    <location>
        <position position="26"/>
    </location>
    <ligand>
        <name>Mg(2+)</name>
        <dbReference type="ChEBI" id="CHEBI:18420"/>
    </ligand>
</feature>
<feature type="binding site" evidence="2">
    <location>
        <begin position="81"/>
        <end position="85"/>
    </location>
    <ligand>
        <name>GTP</name>
        <dbReference type="ChEBI" id="CHEBI:37565"/>
    </ligand>
</feature>
<feature type="binding site" evidence="2">
    <location>
        <begin position="136"/>
        <end position="139"/>
    </location>
    <ligand>
        <name>GTP</name>
        <dbReference type="ChEBI" id="CHEBI:37565"/>
    </ligand>
</feature>
<protein>
    <recommendedName>
        <fullName evidence="2">Elongation factor Tu</fullName>
        <shortName evidence="2">EF-Tu</shortName>
        <ecNumber evidence="2">3.6.5.3</ecNumber>
    </recommendedName>
</protein>
<comment type="function">
    <text evidence="2">GTP hydrolase that promotes the GTP-dependent binding of aminoacyl-tRNA to the A-site of ribosomes during protein biosynthesis.</text>
</comment>
<comment type="catalytic activity">
    <reaction evidence="2">
        <text>GTP + H2O = GDP + phosphate + H(+)</text>
        <dbReference type="Rhea" id="RHEA:19669"/>
        <dbReference type="ChEBI" id="CHEBI:15377"/>
        <dbReference type="ChEBI" id="CHEBI:15378"/>
        <dbReference type="ChEBI" id="CHEBI:37565"/>
        <dbReference type="ChEBI" id="CHEBI:43474"/>
        <dbReference type="ChEBI" id="CHEBI:58189"/>
        <dbReference type="EC" id="3.6.5.3"/>
    </reaction>
    <physiologicalReaction direction="left-to-right" evidence="2">
        <dbReference type="Rhea" id="RHEA:19670"/>
    </physiologicalReaction>
</comment>
<comment type="subunit">
    <text evidence="2">Monomer.</text>
</comment>
<comment type="subcellular location">
    <subcellularLocation>
        <location evidence="2">Cytoplasm</location>
    </subcellularLocation>
</comment>
<comment type="similarity">
    <text evidence="2">Belongs to the TRAFAC class translation factor GTPase superfamily. Classic translation factor GTPase family. EF-Tu/EF-1A subfamily.</text>
</comment>
<organism>
    <name type="scientific">Gloeothece citriformis (strain PCC 7424)</name>
    <name type="common">Cyanothece sp. (strain PCC 7424)</name>
    <dbReference type="NCBI Taxonomy" id="65393"/>
    <lineage>
        <taxon>Bacteria</taxon>
        <taxon>Bacillati</taxon>
        <taxon>Cyanobacteriota</taxon>
        <taxon>Cyanophyceae</taxon>
        <taxon>Oscillatoriophycideae</taxon>
        <taxon>Chroococcales</taxon>
        <taxon>Aphanothecaceae</taxon>
        <taxon>Gloeothece</taxon>
        <taxon>Gloeothece citriformis</taxon>
    </lineage>
</organism>